<protein>
    <recommendedName>
        <fullName>Putative tyrosine-protein phosphatase OCA1</fullName>
        <ecNumber>3.1.3.48</ecNumber>
    </recommendedName>
</protein>
<reference key="1">
    <citation type="journal article" date="2009" name="Nature">
        <title>Evolution of pathogenicity and sexual reproduction in eight Candida genomes.</title>
        <authorList>
            <person name="Butler G."/>
            <person name="Rasmussen M.D."/>
            <person name="Lin M.F."/>
            <person name="Santos M.A.S."/>
            <person name="Sakthikumar S."/>
            <person name="Munro C.A."/>
            <person name="Rheinbay E."/>
            <person name="Grabherr M."/>
            <person name="Forche A."/>
            <person name="Reedy J.L."/>
            <person name="Agrafioti I."/>
            <person name="Arnaud M.B."/>
            <person name="Bates S."/>
            <person name="Brown A.J.P."/>
            <person name="Brunke S."/>
            <person name="Costanzo M.C."/>
            <person name="Fitzpatrick D.A."/>
            <person name="de Groot P.W.J."/>
            <person name="Harris D."/>
            <person name="Hoyer L.L."/>
            <person name="Hube B."/>
            <person name="Klis F.M."/>
            <person name="Kodira C."/>
            <person name="Lennard N."/>
            <person name="Logue M.E."/>
            <person name="Martin R."/>
            <person name="Neiman A.M."/>
            <person name="Nikolaou E."/>
            <person name="Quail M.A."/>
            <person name="Quinn J."/>
            <person name="Santos M.C."/>
            <person name="Schmitzberger F.F."/>
            <person name="Sherlock G."/>
            <person name="Shah P."/>
            <person name="Silverstein K.A.T."/>
            <person name="Skrzypek M.S."/>
            <person name="Soll D."/>
            <person name="Staggs R."/>
            <person name="Stansfield I."/>
            <person name="Stumpf M.P.H."/>
            <person name="Sudbery P.E."/>
            <person name="Srikantha T."/>
            <person name="Zeng Q."/>
            <person name="Berman J."/>
            <person name="Berriman M."/>
            <person name="Heitman J."/>
            <person name="Gow N.A.R."/>
            <person name="Lorenz M.C."/>
            <person name="Birren B.W."/>
            <person name="Kellis M."/>
            <person name="Cuomo C.A."/>
        </authorList>
    </citation>
    <scope>NUCLEOTIDE SEQUENCE [LARGE SCALE GENOMIC DNA]</scope>
    <source>
        <strain>ATCC 6260 / CBS 566 / DSM 6381 / JCM 1539 / NBRC 10279 / NRRL Y-324</strain>
    </source>
</reference>
<keyword id="KW-0963">Cytoplasm</keyword>
<keyword id="KW-0378">Hydrolase</keyword>
<keyword id="KW-0904">Protein phosphatase</keyword>
<keyword id="KW-1185">Reference proteome</keyword>
<keyword id="KW-0346">Stress response</keyword>
<proteinExistence type="inferred from homology"/>
<sequence length="185" mass="21040">MSRKVVQPPSLRIIPPLNFCPVEKQLYRSGQPSIINQSFLQDLNLKTIIWLASEEPQEEFLDYCSMNSINIEFVGMINDDYSYQNVNPWDSLNETTIKKALELICDRNNYPMLVCCGMGRHRTGTVIGCLRRLQGWNLASVSEEYRRFTGARGGRILVELLIEGFDISTVEIGSGKGSSMARKKR</sequence>
<dbReference type="EC" id="3.1.3.48"/>
<dbReference type="EMBL" id="CH408156">
    <property type="protein sequence ID" value="EDK37427.2"/>
    <property type="molecule type" value="Genomic_DNA"/>
</dbReference>
<dbReference type="RefSeq" id="XP_001485854.1">
    <property type="nucleotide sequence ID" value="XM_001485804.1"/>
</dbReference>
<dbReference type="SMR" id="A5DE24"/>
<dbReference type="FunCoup" id="A5DE24">
    <property type="interactions" value="43"/>
</dbReference>
<dbReference type="STRING" id="294746.A5DE24"/>
<dbReference type="GeneID" id="5128470"/>
<dbReference type="KEGG" id="pgu:PGUG_01525"/>
<dbReference type="VEuPathDB" id="FungiDB:PGUG_01525"/>
<dbReference type="eggNOG" id="KOG1572">
    <property type="taxonomic scope" value="Eukaryota"/>
</dbReference>
<dbReference type="HOGENOM" id="CLU_047845_2_2_1"/>
<dbReference type="InParanoid" id="A5DE24"/>
<dbReference type="OMA" id="PWNPISE"/>
<dbReference type="OrthoDB" id="6375174at2759"/>
<dbReference type="Proteomes" id="UP000001997">
    <property type="component" value="Unassembled WGS sequence"/>
</dbReference>
<dbReference type="GO" id="GO:0005737">
    <property type="term" value="C:cytoplasm"/>
    <property type="evidence" value="ECO:0007669"/>
    <property type="project" value="UniProtKB-SubCell"/>
</dbReference>
<dbReference type="GO" id="GO:0004725">
    <property type="term" value="F:protein tyrosine phosphatase activity"/>
    <property type="evidence" value="ECO:0007669"/>
    <property type="project" value="UniProtKB-EC"/>
</dbReference>
<dbReference type="GO" id="GO:0034599">
    <property type="term" value="P:cellular response to oxidative stress"/>
    <property type="evidence" value="ECO:0007669"/>
    <property type="project" value="EnsemblFungi"/>
</dbReference>
<dbReference type="CDD" id="cd14531">
    <property type="entry name" value="PFA-DSP_Oca1"/>
    <property type="match status" value="1"/>
</dbReference>
<dbReference type="FunFam" id="3.90.190.10:FF:000035">
    <property type="entry name" value="Tyrosine phosphatase, putative"/>
    <property type="match status" value="1"/>
</dbReference>
<dbReference type="Gene3D" id="3.90.190.10">
    <property type="entry name" value="Protein tyrosine phosphatase superfamily"/>
    <property type="match status" value="1"/>
</dbReference>
<dbReference type="InterPro" id="IPR020428">
    <property type="entry name" value="PFA-DSPs"/>
</dbReference>
<dbReference type="InterPro" id="IPR029021">
    <property type="entry name" value="Prot-tyrosine_phosphatase-like"/>
</dbReference>
<dbReference type="InterPro" id="IPR004861">
    <property type="entry name" value="Siw14-like"/>
</dbReference>
<dbReference type="InterPro" id="IPR020422">
    <property type="entry name" value="TYR_PHOSPHATASE_DUAL_dom"/>
</dbReference>
<dbReference type="PANTHER" id="PTHR31126">
    <property type="entry name" value="TYROSINE-PROTEIN PHOSPHATASE"/>
    <property type="match status" value="1"/>
</dbReference>
<dbReference type="PANTHER" id="PTHR31126:SF8">
    <property type="entry name" value="TYROSINE-PROTEIN PHOSPHATASE OCA1-RELATED"/>
    <property type="match status" value="1"/>
</dbReference>
<dbReference type="Pfam" id="PF03162">
    <property type="entry name" value="Y_phosphatase2"/>
    <property type="match status" value="1"/>
</dbReference>
<dbReference type="PRINTS" id="PR01911">
    <property type="entry name" value="PFDSPHPHTASE"/>
</dbReference>
<dbReference type="SUPFAM" id="SSF52799">
    <property type="entry name" value="(Phosphotyrosine protein) phosphatases II"/>
    <property type="match status" value="1"/>
</dbReference>
<dbReference type="PROSITE" id="PS50054">
    <property type="entry name" value="TYR_PHOSPHATASE_DUAL"/>
    <property type="match status" value="1"/>
</dbReference>
<organism>
    <name type="scientific">Meyerozyma guilliermondii (strain ATCC 6260 / CBS 566 / DSM 6381 / JCM 1539 / NBRC 10279 / NRRL Y-324)</name>
    <name type="common">Yeast</name>
    <name type="synonym">Candida guilliermondii</name>
    <dbReference type="NCBI Taxonomy" id="294746"/>
    <lineage>
        <taxon>Eukaryota</taxon>
        <taxon>Fungi</taxon>
        <taxon>Dikarya</taxon>
        <taxon>Ascomycota</taxon>
        <taxon>Saccharomycotina</taxon>
        <taxon>Pichiomycetes</taxon>
        <taxon>Debaryomycetaceae</taxon>
        <taxon>Meyerozyma</taxon>
    </lineage>
</organism>
<comment type="function">
    <text evidence="1">Putative tyrosine-protein phosphatase required for protection against superoxide stress.</text>
</comment>
<comment type="catalytic activity">
    <reaction>
        <text>O-phospho-L-tyrosyl-[protein] + H2O = L-tyrosyl-[protein] + phosphate</text>
        <dbReference type="Rhea" id="RHEA:10684"/>
        <dbReference type="Rhea" id="RHEA-COMP:10136"/>
        <dbReference type="Rhea" id="RHEA-COMP:20101"/>
        <dbReference type="ChEBI" id="CHEBI:15377"/>
        <dbReference type="ChEBI" id="CHEBI:43474"/>
        <dbReference type="ChEBI" id="CHEBI:46858"/>
        <dbReference type="ChEBI" id="CHEBI:61978"/>
        <dbReference type="EC" id="3.1.3.48"/>
    </reaction>
</comment>
<comment type="subcellular location">
    <subcellularLocation>
        <location evidence="1">Cytoplasm</location>
    </subcellularLocation>
</comment>
<comment type="similarity">
    <text evidence="3">Belongs to the protein-tyrosine phosphatase family.</text>
</comment>
<evidence type="ECO:0000250" key="1"/>
<evidence type="ECO:0000255" key="2">
    <source>
        <dbReference type="PROSITE-ProRule" id="PRU00160"/>
    </source>
</evidence>
<evidence type="ECO:0000305" key="3"/>
<name>OCA1_PICGU</name>
<feature type="chain" id="PRO_0000333393" description="Putative tyrosine-protein phosphatase OCA1">
    <location>
        <begin position="1"/>
        <end position="185"/>
    </location>
</feature>
<feature type="domain" description="Tyrosine-protein phosphatase" evidence="2">
    <location>
        <begin position="18"/>
        <end position="178"/>
    </location>
</feature>
<feature type="active site" description="Phosphocysteine intermediate" evidence="2">
    <location>
        <position position="116"/>
    </location>
</feature>
<gene>
    <name type="primary">OCA1</name>
    <name type="ORF">PGUG_01525</name>
</gene>
<accession>A5DE24</accession>